<protein>
    <recommendedName>
        <fullName evidence="1">S-adenosylmethionine synthase</fullName>
        <shortName evidence="1">AdoMet synthase</shortName>
        <ecNumber evidence="1">2.5.1.6</ecNumber>
    </recommendedName>
    <alternativeName>
        <fullName evidence="1">Methionine adenosyltransferase</fullName>
    </alternativeName>
</protein>
<reference key="1">
    <citation type="journal article" date="2006" name="BMC Genomics">
        <title>The genome of the square archaeon Haloquadratum walsbyi: life at the limits of water activity.</title>
        <authorList>
            <person name="Bolhuis H."/>
            <person name="Palm P."/>
            <person name="Wende A."/>
            <person name="Falb M."/>
            <person name="Rampp M."/>
            <person name="Rodriguez-Valera F."/>
            <person name="Pfeiffer F."/>
            <person name="Oesterhelt D."/>
        </authorList>
    </citation>
    <scope>NUCLEOTIDE SEQUENCE [LARGE SCALE GENOMIC DNA]</scope>
    <source>
        <strain>DSM 16790 / HBSQ001</strain>
    </source>
</reference>
<feature type="chain" id="PRO_0000259463" description="S-adenosylmethionine synthase">
    <location>
        <begin position="1"/>
        <end position="401"/>
    </location>
</feature>
<feature type="binding site" evidence="1">
    <location>
        <begin position="137"/>
        <end position="142"/>
    </location>
    <ligand>
        <name>ATP</name>
        <dbReference type="ChEBI" id="CHEBI:30616"/>
    </ligand>
</feature>
<evidence type="ECO:0000255" key="1">
    <source>
        <dbReference type="HAMAP-Rule" id="MF_00136"/>
    </source>
</evidence>
<proteinExistence type="inferred from homology"/>
<name>METK_HALWD</name>
<gene>
    <name evidence="1" type="primary">mat</name>
    <name type="ordered locus">HQ_2584A</name>
</gene>
<sequence length="401" mass="43550">MTERNIAIEAANRDAVEDQRVEIVERKGIGHPDSICDGIAETVSRALSQLYLDRVGHVLHYNTDETQLVAGESIPDFDGGEVVEPIYILIVGRATKKYNGQRLPVDSTAVSAARTYLRENIPALTLGTDVIVDVRLGQGSGDLKDVFGENNVEIPMANDTSFGVGHAPLTETEKIVQAVEMQLNGPYADNHPVIGPDIKVMGKRENNSIDITVAAAMIDRYVADLEDYADAIENIRAFVTDVAHRHTNREVTVAVNTADDYDTGSIYLTVTGTSAEMGDDGSVGRGNRANGLITPNRPMSMEATSGKNPVNHIGKIYNLLSTDIAESVVADVDGIRDLQIRLLSQIGRPIDEPHIADAKIVTESNVNLQAIEPEIRAIIDNRLADVTSITERVINDELTTF</sequence>
<accession>Q18H49</accession>
<keyword id="KW-0067">ATP-binding</keyword>
<keyword id="KW-0460">Magnesium</keyword>
<keyword id="KW-0547">Nucleotide-binding</keyword>
<keyword id="KW-0554">One-carbon metabolism</keyword>
<keyword id="KW-1185">Reference proteome</keyword>
<keyword id="KW-0808">Transferase</keyword>
<dbReference type="EC" id="2.5.1.6" evidence="1"/>
<dbReference type="EMBL" id="AM180088">
    <property type="protein sequence ID" value="CAJ52696.1"/>
    <property type="molecule type" value="Genomic_DNA"/>
</dbReference>
<dbReference type="RefSeq" id="WP_011571812.1">
    <property type="nucleotide sequence ID" value="NC_008212.1"/>
</dbReference>
<dbReference type="SMR" id="Q18H49"/>
<dbReference type="STRING" id="362976.HQ_2584A"/>
<dbReference type="GeneID" id="4194272"/>
<dbReference type="KEGG" id="hwa:HQ_2584A"/>
<dbReference type="eggNOG" id="arCOG01678">
    <property type="taxonomic scope" value="Archaea"/>
</dbReference>
<dbReference type="HOGENOM" id="CLU_057642_0_0_2"/>
<dbReference type="UniPathway" id="UPA00315">
    <property type="reaction ID" value="UER00080"/>
</dbReference>
<dbReference type="Proteomes" id="UP000001975">
    <property type="component" value="Chromosome"/>
</dbReference>
<dbReference type="GO" id="GO:0005524">
    <property type="term" value="F:ATP binding"/>
    <property type="evidence" value="ECO:0007669"/>
    <property type="project" value="UniProtKB-UniRule"/>
</dbReference>
<dbReference type="GO" id="GO:0000287">
    <property type="term" value="F:magnesium ion binding"/>
    <property type="evidence" value="ECO:0007669"/>
    <property type="project" value="UniProtKB-UniRule"/>
</dbReference>
<dbReference type="GO" id="GO:0004478">
    <property type="term" value="F:methionine adenosyltransferase activity"/>
    <property type="evidence" value="ECO:0007669"/>
    <property type="project" value="UniProtKB-UniRule"/>
</dbReference>
<dbReference type="GO" id="GO:0006730">
    <property type="term" value="P:one-carbon metabolic process"/>
    <property type="evidence" value="ECO:0007669"/>
    <property type="project" value="UniProtKB-KW"/>
</dbReference>
<dbReference type="GO" id="GO:0006556">
    <property type="term" value="P:S-adenosylmethionine biosynthetic process"/>
    <property type="evidence" value="ECO:0007669"/>
    <property type="project" value="UniProtKB-UniRule"/>
</dbReference>
<dbReference type="Gene3D" id="3.30.300.10">
    <property type="match status" value="1"/>
</dbReference>
<dbReference type="Gene3D" id="3.30.300.280">
    <property type="entry name" value="S-adenosylmethionine synthetase, C-terminal domain"/>
    <property type="match status" value="1"/>
</dbReference>
<dbReference type="HAMAP" id="MF_00136">
    <property type="entry name" value="S_AdoMet_synth2"/>
    <property type="match status" value="1"/>
</dbReference>
<dbReference type="InterPro" id="IPR027790">
    <property type="entry name" value="AdoMet_synthase_2_family"/>
</dbReference>
<dbReference type="InterPro" id="IPR042544">
    <property type="entry name" value="AdoMet_synthase_3"/>
</dbReference>
<dbReference type="InterPro" id="IPR002795">
    <property type="entry name" value="S-AdoMet_synthetase_arc"/>
</dbReference>
<dbReference type="NCBIfam" id="NF003364">
    <property type="entry name" value="PRK04439.1-3"/>
    <property type="match status" value="1"/>
</dbReference>
<dbReference type="NCBIfam" id="NF003366">
    <property type="entry name" value="PRK04439.1-5"/>
    <property type="match status" value="1"/>
</dbReference>
<dbReference type="PANTHER" id="PTHR36697">
    <property type="entry name" value="S-ADENOSYLMETHIONINE SYNTHASE"/>
    <property type="match status" value="1"/>
</dbReference>
<dbReference type="PANTHER" id="PTHR36697:SF1">
    <property type="entry name" value="S-ADENOSYLMETHIONINE SYNTHASE"/>
    <property type="match status" value="1"/>
</dbReference>
<dbReference type="Pfam" id="PF01941">
    <property type="entry name" value="AdoMet_Synthase"/>
    <property type="match status" value="1"/>
</dbReference>
<organism>
    <name type="scientific">Haloquadratum walsbyi (strain DSM 16790 / HBSQ001)</name>
    <dbReference type="NCBI Taxonomy" id="362976"/>
    <lineage>
        <taxon>Archaea</taxon>
        <taxon>Methanobacteriati</taxon>
        <taxon>Methanobacteriota</taxon>
        <taxon>Stenosarchaea group</taxon>
        <taxon>Halobacteria</taxon>
        <taxon>Halobacteriales</taxon>
        <taxon>Haloferacaceae</taxon>
        <taxon>Haloquadratum</taxon>
    </lineage>
</organism>
<comment type="function">
    <text evidence="1">Catalyzes the formation of S-adenosylmethionine from methionine and ATP.</text>
</comment>
<comment type="catalytic activity">
    <reaction evidence="1">
        <text>L-methionine + ATP + H2O = S-adenosyl-L-methionine + phosphate + diphosphate</text>
        <dbReference type="Rhea" id="RHEA:21080"/>
        <dbReference type="ChEBI" id="CHEBI:15377"/>
        <dbReference type="ChEBI" id="CHEBI:30616"/>
        <dbReference type="ChEBI" id="CHEBI:33019"/>
        <dbReference type="ChEBI" id="CHEBI:43474"/>
        <dbReference type="ChEBI" id="CHEBI:57844"/>
        <dbReference type="ChEBI" id="CHEBI:59789"/>
        <dbReference type="EC" id="2.5.1.6"/>
    </reaction>
</comment>
<comment type="cofactor">
    <cofactor evidence="1">
        <name>Mg(2+)</name>
        <dbReference type="ChEBI" id="CHEBI:18420"/>
    </cofactor>
</comment>
<comment type="pathway">
    <text evidence="1">Amino-acid biosynthesis; S-adenosyl-L-methionine biosynthesis; S-adenosyl-L-methionine from L-methionine: step 1/1.</text>
</comment>
<comment type="similarity">
    <text evidence="1">Belongs to the AdoMet synthase 2 family.</text>
</comment>